<gene>
    <name evidence="7" type="primary">chrA1</name>
    <name evidence="4" type="synonym">chrA</name>
    <name evidence="6" type="ordered locus">Rmet_6202</name>
    <name evidence="8" type="ORF">RMe0090</name>
</gene>
<name>CHRA1_CUPMC</name>
<reference key="1">
    <citation type="journal article" date="1990" name="J. Biol. Chem.">
        <title>Nucleotide sequence and expression of a plasmid-encoded chromate resistance determinant from Alcaligenes eutrophus.</title>
        <authorList>
            <person name="Nies A."/>
            <person name="Nies D.H."/>
            <person name="Silver S."/>
        </authorList>
    </citation>
    <scope>NUCLEOTIDE SEQUENCE [GENOMIC DNA]</scope>
    <scope>FUNCTION</scope>
</reference>
<reference key="2">
    <citation type="submission" date="2004-10" db="EMBL/GenBank/DDBJ databases">
        <title>Sequence and features of the Ralstonia metallidurans CH34 heavy metal plasmids pMOL28 and pMOL30.</title>
        <authorList>
            <person name="van der Lelie D."/>
            <person name="Monchy S."/>
            <person name="Taghavi S."/>
            <person name="McCorkle S."/>
            <person name="Dunn J."/>
            <person name="Benotmane M."/>
            <person name="Vallaeys T."/>
            <person name="Lapidus A."/>
            <person name="Mergeay M."/>
        </authorList>
    </citation>
    <scope>NUCLEOTIDE SEQUENCE [LARGE SCALE GENOMIC DNA]</scope>
</reference>
<reference key="3">
    <citation type="journal article" date="2010" name="PLoS ONE">
        <title>The complete genome sequence of Cupriavidus metallidurans strain CH34, a master survivalist in harsh and anthropogenic environments.</title>
        <authorList>
            <person name="Janssen P.J."/>
            <person name="Van Houdt R."/>
            <person name="Moors H."/>
            <person name="Monsieurs P."/>
            <person name="Morin N."/>
            <person name="Michaux A."/>
            <person name="Benotmane M.A."/>
            <person name="Leys N."/>
            <person name="Vallaeys T."/>
            <person name="Lapidus A."/>
            <person name="Monchy S."/>
            <person name="Medigue C."/>
            <person name="Taghavi S."/>
            <person name="McCorkle S."/>
            <person name="Dunn J."/>
            <person name="van der Lelie D."/>
            <person name="Mergeay M."/>
        </authorList>
    </citation>
    <scope>NUCLEOTIDE SEQUENCE [LARGE SCALE GENOMIC DNA]</scope>
    <source>
        <strain>ATCC 43123 / DSM 2839 / NBRC 102507 / CH34</strain>
    </source>
</reference>
<reference key="4">
    <citation type="journal article" date="2002" name="Arch. Microbiol.">
        <title>New genes involved in chromate resistance in Ralstonia metallidurans strain CH34.</title>
        <authorList>
            <person name="Juhnke S."/>
            <person name="Peitzsch N."/>
            <person name="Huebener N."/>
            <person name="Grosse C."/>
            <person name="Nies D.H."/>
        </authorList>
    </citation>
    <scope>INDUCTION</scope>
</reference>
<protein>
    <recommendedName>
        <fullName evidence="5">Chromate transport protein</fullName>
    </recommendedName>
</protein>
<feature type="chain" id="PRO_0000089654" description="Chromate transport protein">
    <location>
        <begin position="1"/>
        <end position="401"/>
    </location>
</feature>
<feature type="transmembrane region" description="Helical" evidence="1">
    <location>
        <begin position="26"/>
        <end position="46"/>
    </location>
</feature>
<feature type="transmembrane region" description="Helical" evidence="1">
    <location>
        <begin position="67"/>
        <end position="87"/>
    </location>
</feature>
<feature type="transmembrane region" description="Helical" evidence="1">
    <location>
        <begin position="93"/>
        <end position="113"/>
    </location>
</feature>
<feature type="transmembrane region" description="Helical" evidence="1">
    <location>
        <begin position="124"/>
        <end position="144"/>
    </location>
</feature>
<feature type="transmembrane region" description="Helical" evidence="1">
    <location>
        <begin position="172"/>
        <end position="192"/>
    </location>
</feature>
<feature type="transmembrane region" description="Helical" evidence="1">
    <location>
        <begin position="214"/>
        <end position="234"/>
    </location>
</feature>
<feature type="transmembrane region" description="Helical" evidence="1">
    <location>
        <begin position="237"/>
        <end position="257"/>
    </location>
</feature>
<feature type="transmembrane region" description="Helical" evidence="1">
    <location>
        <begin position="272"/>
        <end position="294"/>
    </location>
</feature>
<feature type="transmembrane region" description="Helical" evidence="1">
    <location>
        <begin position="299"/>
        <end position="321"/>
    </location>
</feature>
<feature type="transmembrane region" description="Helical" evidence="1">
    <location>
        <begin position="330"/>
        <end position="350"/>
    </location>
</feature>
<feature type="transmembrane region" description="Helical" evidence="1">
    <location>
        <begin position="356"/>
        <end position="376"/>
    </location>
</feature>
<feature type="transmembrane region" description="Helical" evidence="1">
    <location>
        <begin position="379"/>
        <end position="399"/>
    </location>
</feature>
<keyword id="KW-0997">Cell inner membrane</keyword>
<keyword id="KW-1003">Cell membrane</keyword>
<keyword id="KW-0155">Chromate resistance</keyword>
<keyword id="KW-0472">Membrane</keyword>
<keyword id="KW-0614">Plasmid</keyword>
<keyword id="KW-1185">Reference proteome</keyword>
<keyword id="KW-0812">Transmembrane</keyword>
<keyword id="KW-1133">Transmembrane helix</keyword>
<keyword id="KW-0813">Transport</keyword>
<organism>
    <name type="scientific">Cupriavidus metallidurans (strain ATCC 43123 / DSM 2839 / NBRC 102507 / CH34)</name>
    <name type="common">Ralstonia metallidurans</name>
    <dbReference type="NCBI Taxonomy" id="266264"/>
    <lineage>
        <taxon>Bacteria</taxon>
        <taxon>Pseudomonadati</taxon>
        <taxon>Pseudomonadota</taxon>
        <taxon>Betaproteobacteria</taxon>
        <taxon>Burkholderiales</taxon>
        <taxon>Burkholderiaceae</taxon>
        <taxon>Cupriavidus</taxon>
    </lineage>
</organism>
<sequence>MNSPQPPDTTAAGSVHTAPTYTLRQLVMYFLRLGTLGFGGPVALAGYMHRDLVEAKQWITDADYKEGLALAQLAPGPLAAQLAIYLGYVHYRIVGATLVGVAFVLPSFLMVLALGWAYVRFGGLTWMQSVFYGVGAAVIGIIAISAYKLTKKSVGNDKLLWFIYLVLVAVTVITESEVAWLFLAAGVLVWFWRAPPKWLRQGKMNAFAATPLPAASGMMSTLDWPLLSQIGVFFAKAGAFVFGSGLAIVPFLYGGVVTEYHWLNDKQFVDAVAVAMITPGPVVITVGFIGYLVAGLPGACVAAAATFLPCYLFTVLPAPYFKKYGKLPAILAFVDGVTAAAIGAITGAVIVLAKRSIVDIPTALLALVTVALLLKFKKLSEPMIVAGAALIGLVAYPLLHH</sequence>
<proteinExistence type="evidence at transcript level"/>
<comment type="function">
    <text evidence="3">This protein reduces chromate accumulation and is essential for chromate resistance.</text>
</comment>
<comment type="subcellular location">
    <subcellularLocation>
        <location evidence="5">Cell inner membrane</location>
        <topology evidence="1">Multi-pass membrane protein</topology>
    </subcellularLocation>
</comment>
<comment type="induction">
    <text evidence="2">By chromate; induction increases when cells are grown in the presence of high sulfate concentrations (3 mM SO4(2-)).</text>
</comment>
<comment type="similarity">
    <text evidence="5">Belongs to the chromate ion transporter (CHR) (TC 2.A.51) family.</text>
</comment>
<comment type="sequence caution" evidence="5">
    <conflict type="erroneous initiation">
        <sequence resource="EMBL-CDS" id="CAI30234"/>
    </conflict>
    <text>Truncated N-terminus.</text>
</comment>
<dbReference type="EMBL" id="AJ313327">
    <property type="protein sequence ID" value="CAC42411.1"/>
    <property type="molecule type" value="Genomic_DNA"/>
</dbReference>
<dbReference type="EMBL" id="X90708">
    <property type="protein sequence ID" value="CAI30234.1"/>
    <property type="status" value="ALT_INIT"/>
    <property type="molecule type" value="Genomic_DNA"/>
</dbReference>
<dbReference type="EMBL" id="CP000355">
    <property type="protein sequence ID" value="ABF13061.1"/>
    <property type="molecule type" value="Genomic_DNA"/>
</dbReference>
<dbReference type="PIR" id="B35177">
    <property type="entry name" value="B35177"/>
</dbReference>
<dbReference type="RefSeq" id="WP_011514877.1">
    <property type="nucleotide sequence ID" value="NC_007972.2"/>
</dbReference>
<dbReference type="RefSeq" id="YP_161712.1">
    <property type="nucleotide sequence ID" value="NC_006525.1"/>
</dbReference>
<dbReference type="TCDB" id="2.A.51.1.1">
    <property type="family name" value="the chromate ion transporter (chr) family"/>
</dbReference>
<dbReference type="KEGG" id="rme:Rmet_6202"/>
<dbReference type="HOGENOM" id="CLU_018106_0_0_4"/>
<dbReference type="Proteomes" id="UP000002429">
    <property type="component" value="Plasmid pMOL28"/>
</dbReference>
<dbReference type="GO" id="GO:0005886">
    <property type="term" value="C:plasma membrane"/>
    <property type="evidence" value="ECO:0007669"/>
    <property type="project" value="UniProtKB-SubCell"/>
</dbReference>
<dbReference type="GO" id="GO:0015109">
    <property type="term" value="F:chromate transmembrane transporter activity"/>
    <property type="evidence" value="ECO:0007669"/>
    <property type="project" value="InterPro"/>
</dbReference>
<dbReference type="GO" id="GO:0046687">
    <property type="term" value="P:response to chromate"/>
    <property type="evidence" value="ECO:0007669"/>
    <property type="project" value="UniProtKB-KW"/>
</dbReference>
<dbReference type="InterPro" id="IPR014047">
    <property type="entry name" value="Chr_Tranpt_l_chain"/>
</dbReference>
<dbReference type="InterPro" id="IPR052518">
    <property type="entry name" value="CHR_Transporter"/>
</dbReference>
<dbReference type="InterPro" id="IPR003370">
    <property type="entry name" value="Chromate_transpt"/>
</dbReference>
<dbReference type="NCBIfam" id="TIGR00937">
    <property type="entry name" value="2A51"/>
    <property type="match status" value="1"/>
</dbReference>
<dbReference type="PANTHER" id="PTHR43663">
    <property type="entry name" value="CHROMATE TRANSPORT PROTEIN-RELATED"/>
    <property type="match status" value="1"/>
</dbReference>
<dbReference type="PANTHER" id="PTHR43663:SF1">
    <property type="entry name" value="CHROMATE TRANSPORTER"/>
    <property type="match status" value="1"/>
</dbReference>
<dbReference type="Pfam" id="PF02417">
    <property type="entry name" value="Chromate_transp"/>
    <property type="match status" value="2"/>
</dbReference>
<dbReference type="PIRSF" id="PIRSF004810">
    <property type="entry name" value="ChrA"/>
    <property type="match status" value="1"/>
</dbReference>
<accession>P17551</accession>
<accession>Q1L9W5</accession>
<accession>Q5NV00</accession>
<geneLocation type="plasmid">
    <name>pMOL28</name>
</geneLocation>
<evidence type="ECO:0000255" key="1"/>
<evidence type="ECO:0000269" key="2">
    <source>
    </source>
</evidence>
<evidence type="ECO:0000269" key="3">
    <source>
    </source>
</evidence>
<evidence type="ECO:0000303" key="4">
    <source>
    </source>
</evidence>
<evidence type="ECO:0000305" key="5"/>
<evidence type="ECO:0000312" key="6">
    <source>
        <dbReference type="EMBL" id="ABF13061.1"/>
    </source>
</evidence>
<evidence type="ECO:0000312" key="7">
    <source>
        <dbReference type="EMBL" id="CAC42411.1"/>
    </source>
</evidence>
<evidence type="ECO:0000312" key="8">
    <source>
        <dbReference type="EMBL" id="CAI30234.1"/>
    </source>
</evidence>